<feature type="chain" id="PRO_1000137559" description="Protein GrpE">
    <location>
        <begin position="1"/>
        <end position="208"/>
    </location>
</feature>
<feature type="region of interest" description="Disordered" evidence="2">
    <location>
        <begin position="1"/>
        <end position="65"/>
    </location>
</feature>
<feature type="compositionally biased region" description="Basic and acidic residues" evidence="2">
    <location>
        <begin position="1"/>
        <end position="27"/>
    </location>
</feature>
<feature type="compositionally biased region" description="Acidic residues" evidence="2">
    <location>
        <begin position="45"/>
        <end position="64"/>
    </location>
</feature>
<accession>B8FGS4</accession>
<dbReference type="EMBL" id="CP001322">
    <property type="protein sequence ID" value="ACL05304.1"/>
    <property type="molecule type" value="Genomic_DNA"/>
</dbReference>
<dbReference type="RefSeq" id="WP_015948361.1">
    <property type="nucleotide sequence ID" value="NC_011768.1"/>
</dbReference>
<dbReference type="SMR" id="B8FGS4"/>
<dbReference type="KEGG" id="dal:Dalk_3616"/>
<dbReference type="eggNOG" id="COG0576">
    <property type="taxonomic scope" value="Bacteria"/>
</dbReference>
<dbReference type="HOGENOM" id="CLU_057217_6_2_7"/>
<dbReference type="Proteomes" id="UP000000739">
    <property type="component" value="Chromosome"/>
</dbReference>
<dbReference type="GO" id="GO:0005737">
    <property type="term" value="C:cytoplasm"/>
    <property type="evidence" value="ECO:0007669"/>
    <property type="project" value="UniProtKB-SubCell"/>
</dbReference>
<dbReference type="GO" id="GO:0000774">
    <property type="term" value="F:adenyl-nucleotide exchange factor activity"/>
    <property type="evidence" value="ECO:0007669"/>
    <property type="project" value="InterPro"/>
</dbReference>
<dbReference type="GO" id="GO:0042803">
    <property type="term" value="F:protein homodimerization activity"/>
    <property type="evidence" value="ECO:0007669"/>
    <property type="project" value="InterPro"/>
</dbReference>
<dbReference type="GO" id="GO:0051087">
    <property type="term" value="F:protein-folding chaperone binding"/>
    <property type="evidence" value="ECO:0007669"/>
    <property type="project" value="InterPro"/>
</dbReference>
<dbReference type="GO" id="GO:0051082">
    <property type="term" value="F:unfolded protein binding"/>
    <property type="evidence" value="ECO:0007669"/>
    <property type="project" value="TreeGrafter"/>
</dbReference>
<dbReference type="GO" id="GO:0006457">
    <property type="term" value="P:protein folding"/>
    <property type="evidence" value="ECO:0007669"/>
    <property type="project" value="InterPro"/>
</dbReference>
<dbReference type="CDD" id="cd00446">
    <property type="entry name" value="GrpE"/>
    <property type="match status" value="1"/>
</dbReference>
<dbReference type="FunFam" id="2.30.22.10:FF:000001">
    <property type="entry name" value="Protein GrpE"/>
    <property type="match status" value="1"/>
</dbReference>
<dbReference type="Gene3D" id="3.90.20.20">
    <property type="match status" value="1"/>
</dbReference>
<dbReference type="Gene3D" id="2.30.22.10">
    <property type="entry name" value="Head domain of nucleotide exchange factor GrpE"/>
    <property type="match status" value="1"/>
</dbReference>
<dbReference type="HAMAP" id="MF_01151">
    <property type="entry name" value="GrpE"/>
    <property type="match status" value="1"/>
</dbReference>
<dbReference type="InterPro" id="IPR000740">
    <property type="entry name" value="GrpE"/>
</dbReference>
<dbReference type="InterPro" id="IPR013805">
    <property type="entry name" value="GrpE_coiled_coil"/>
</dbReference>
<dbReference type="InterPro" id="IPR009012">
    <property type="entry name" value="GrpE_head"/>
</dbReference>
<dbReference type="NCBIfam" id="NF010738">
    <property type="entry name" value="PRK14140.1"/>
    <property type="match status" value="1"/>
</dbReference>
<dbReference type="NCBIfam" id="NF010748">
    <property type="entry name" value="PRK14150.1"/>
    <property type="match status" value="1"/>
</dbReference>
<dbReference type="PANTHER" id="PTHR21237">
    <property type="entry name" value="GRPE PROTEIN"/>
    <property type="match status" value="1"/>
</dbReference>
<dbReference type="PANTHER" id="PTHR21237:SF23">
    <property type="entry name" value="GRPE PROTEIN HOMOLOG, MITOCHONDRIAL"/>
    <property type="match status" value="1"/>
</dbReference>
<dbReference type="Pfam" id="PF01025">
    <property type="entry name" value="GrpE"/>
    <property type="match status" value="1"/>
</dbReference>
<dbReference type="PRINTS" id="PR00773">
    <property type="entry name" value="GRPEPROTEIN"/>
</dbReference>
<dbReference type="SUPFAM" id="SSF58014">
    <property type="entry name" value="Coiled-coil domain of nucleotide exchange factor GrpE"/>
    <property type="match status" value="1"/>
</dbReference>
<dbReference type="SUPFAM" id="SSF51064">
    <property type="entry name" value="Head domain of nucleotide exchange factor GrpE"/>
    <property type="match status" value="1"/>
</dbReference>
<dbReference type="PROSITE" id="PS01071">
    <property type="entry name" value="GRPE"/>
    <property type="match status" value="1"/>
</dbReference>
<reference key="1">
    <citation type="journal article" date="2012" name="Environ. Microbiol.">
        <title>The genome sequence of Desulfatibacillum alkenivorans AK-01: a blueprint for anaerobic alkane oxidation.</title>
        <authorList>
            <person name="Callaghan A.V."/>
            <person name="Morris B.E."/>
            <person name="Pereira I.A."/>
            <person name="McInerney M.J."/>
            <person name="Austin R.N."/>
            <person name="Groves J.T."/>
            <person name="Kukor J.J."/>
            <person name="Suflita J.M."/>
            <person name="Young L.Y."/>
            <person name="Zylstra G.J."/>
            <person name="Wawrik B."/>
        </authorList>
    </citation>
    <scope>NUCLEOTIDE SEQUENCE [LARGE SCALE GENOMIC DNA]</scope>
    <source>
        <strain>AK-01</strain>
    </source>
</reference>
<keyword id="KW-0143">Chaperone</keyword>
<keyword id="KW-0963">Cytoplasm</keyword>
<keyword id="KW-1185">Reference proteome</keyword>
<keyword id="KW-0346">Stress response</keyword>
<proteinExistence type="inferred from homology"/>
<name>GRPE_DESAL</name>
<evidence type="ECO:0000255" key="1">
    <source>
        <dbReference type="HAMAP-Rule" id="MF_01151"/>
    </source>
</evidence>
<evidence type="ECO:0000256" key="2">
    <source>
        <dbReference type="SAM" id="MobiDB-lite"/>
    </source>
</evidence>
<gene>
    <name evidence="1" type="primary">grpE</name>
    <name type="ordered locus">Dalk_3616</name>
</gene>
<sequence>MERMNQSRKVPIHDAAEESSAEAHETQEAGNMEEQAREAEIQQEMAEEAVEQAQDAEEAQEEEAADYKDLYLRTLAEFENYRRRADRETNEFKKYANETLIKDIIPVIDNLERAMECTVNTDDPGCAQNLLAGVQMTEREILKVLEKYGVTRISAIGETFDPAYHQALMAEESDEHPDETVIREMQKGYLLKDRLIRPALVAVAKGKA</sequence>
<protein>
    <recommendedName>
        <fullName evidence="1">Protein GrpE</fullName>
    </recommendedName>
    <alternativeName>
        <fullName evidence="1">HSP-70 cofactor</fullName>
    </alternativeName>
</protein>
<organism>
    <name type="scientific">Desulfatibacillum aliphaticivorans</name>
    <dbReference type="NCBI Taxonomy" id="218208"/>
    <lineage>
        <taxon>Bacteria</taxon>
        <taxon>Pseudomonadati</taxon>
        <taxon>Thermodesulfobacteriota</taxon>
        <taxon>Desulfobacteria</taxon>
        <taxon>Desulfobacterales</taxon>
        <taxon>Desulfatibacillaceae</taxon>
        <taxon>Desulfatibacillum</taxon>
    </lineage>
</organism>
<comment type="function">
    <text evidence="1">Participates actively in the response to hyperosmotic and heat shock by preventing the aggregation of stress-denatured proteins, in association with DnaK and GrpE. It is the nucleotide exchange factor for DnaK and may function as a thermosensor. Unfolded proteins bind initially to DnaJ; upon interaction with the DnaJ-bound protein, DnaK hydrolyzes its bound ATP, resulting in the formation of a stable complex. GrpE releases ADP from DnaK; ATP binding to DnaK triggers the release of the substrate protein, thus completing the reaction cycle. Several rounds of ATP-dependent interactions between DnaJ, DnaK and GrpE are required for fully efficient folding.</text>
</comment>
<comment type="subunit">
    <text evidence="1">Homodimer.</text>
</comment>
<comment type="subcellular location">
    <subcellularLocation>
        <location evidence="1">Cytoplasm</location>
    </subcellularLocation>
</comment>
<comment type="similarity">
    <text evidence="1">Belongs to the GrpE family.</text>
</comment>